<comment type="cofactor">
    <cofactor evidence="1">
        <name>Zn(2+)</name>
        <dbReference type="ChEBI" id="CHEBI:29105"/>
    </cofactor>
</comment>
<comment type="interaction">
    <interactant intactId="EBI-12275374">
        <id>Q5TFG8</id>
    </interactant>
    <interactant intactId="EBI-10276168">
        <id>Q8WTX7</id>
        <label>CASTOR1</label>
    </interactant>
    <organismsDiffer>false</organismsDiffer>
    <experiments>3</experiments>
</comment>
<comment type="interaction">
    <interactant intactId="EBI-12275374">
        <id>Q5TFG8</id>
    </interactant>
    <interactant intactId="EBI-638925">
        <id>Q06546</id>
        <label>GABPA</label>
    </interactant>
    <organismsDiffer>false</organismsDiffer>
    <experiments>3</experiments>
</comment>
<comment type="interaction">
    <interactant intactId="EBI-12275374">
        <id>Q5TFG8</id>
    </interactant>
    <interactant intactId="EBI-713635">
        <id>O43639</id>
        <label>NCK2</label>
    </interactant>
    <organismsDiffer>false</organismsDiffer>
    <experiments>3</experiments>
</comment>
<comment type="interaction">
    <interactant intactId="EBI-12275374">
        <id>Q5TFG8</id>
    </interactant>
    <interactant intactId="EBI-10271199">
        <id>Q8NI38</id>
        <label>NFKBID</label>
    </interactant>
    <organismsDiffer>false</organismsDiffer>
    <experiments>3</experiments>
</comment>
<comment type="interaction">
    <interactant intactId="EBI-12275374">
        <id>Q5TFG8</id>
    </interactant>
    <interactant intactId="EBI-10183064">
        <id>Q8N5A5-2</id>
        <label>ZGPAT</label>
    </interactant>
    <organismsDiffer>false</organismsDiffer>
    <experiments>3</experiments>
</comment>
<comment type="similarity">
    <text evidence="3">Belongs to the ZC2HC1 family.</text>
</comment>
<reference key="1">
    <citation type="journal article" date="2003" name="Nature">
        <title>The DNA sequence and analysis of human chromosome 6.</title>
        <authorList>
            <person name="Mungall A.J."/>
            <person name="Palmer S.A."/>
            <person name="Sims S.K."/>
            <person name="Edwards C.A."/>
            <person name="Ashurst J.L."/>
            <person name="Wilming L."/>
            <person name="Jones M.C."/>
            <person name="Horton R."/>
            <person name="Hunt S.E."/>
            <person name="Scott C.E."/>
            <person name="Gilbert J.G.R."/>
            <person name="Clamp M.E."/>
            <person name="Bethel G."/>
            <person name="Milne S."/>
            <person name="Ainscough R."/>
            <person name="Almeida J.P."/>
            <person name="Ambrose K.D."/>
            <person name="Andrews T.D."/>
            <person name="Ashwell R.I.S."/>
            <person name="Babbage A.K."/>
            <person name="Bagguley C.L."/>
            <person name="Bailey J."/>
            <person name="Banerjee R."/>
            <person name="Barker D.J."/>
            <person name="Barlow K.F."/>
            <person name="Bates K."/>
            <person name="Beare D.M."/>
            <person name="Beasley H."/>
            <person name="Beasley O."/>
            <person name="Bird C.P."/>
            <person name="Blakey S.E."/>
            <person name="Bray-Allen S."/>
            <person name="Brook J."/>
            <person name="Brown A.J."/>
            <person name="Brown J.Y."/>
            <person name="Burford D.C."/>
            <person name="Burrill W."/>
            <person name="Burton J."/>
            <person name="Carder C."/>
            <person name="Carter N.P."/>
            <person name="Chapman J.C."/>
            <person name="Clark S.Y."/>
            <person name="Clark G."/>
            <person name="Clee C.M."/>
            <person name="Clegg S."/>
            <person name="Cobley V."/>
            <person name="Collier R.E."/>
            <person name="Collins J.E."/>
            <person name="Colman L.K."/>
            <person name="Corby N.R."/>
            <person name="Coville G.J."/>
            <person name="Culley K.M."/>
            <person name="Dhami P."/>
            <person name="Davies J."/>
            <person name="Dunn M."/>
            <person name="Earthrowl M.E."/>
            <person name="Ellington A.E."/>
            <person name="Evans K.A."/>
            <person name="Faulkner L."/>
            <person name="Francis M.D."/>
            <person name="Frankish A."/>
            <person name="Frankland J."/>
            <person name="French L."/>
            <person name="Garner P."/>
            <person name="Garnett J."/>
            <person name="Ghori M.J."/>
            <person name="Gilby L.M."/>
            <person name="Gillson C.J."/>
            <person name="Glithero R.J."/>
            <person name="Grafham D.V."/>
            <person name="Grant M."/>
            <person name="Gribble S."/>
            <person name="Griffiths C."/>
            <person name="Griffiths M.N.D."/>
            <person name="Hall R."/>
            <person name="Halls K.S."/>
            <person name="Hammond S."/>
            <person name="Harley J.L."/>
            <person name="Hart E.A."/>
            <person name="Heath P.D."/>
            <person name="Heathcott R."/>
            <person name="Holmes S.J."/>
            <person name="Howden P.J."/>
            <person name="Howe K.L."/>
            <person name="Howell G.R."/>
            <person name="Huckle E."/>
            <person name="Humphray S.J."/>
            <person name="Humphries M.D."/>
            <person name="Hunt A.R."/>
            <person name="Johnson C.M."/>
            <person name="Joy A.A."/>
            <person name="Kay M."/>
            <person name="Keenan S.J."/>
            <person name="Kimberley A.M."/>
            <person name="King A."/>
            <person name="Laird G.K."/>
            <person name="Langford C."/>
            <person name="Lawlor S."/>
            <person name="Leongamornlert D.A."/>
            <person name="Leversha M."/>
            <person name="Lloyd C.R."/>
            <person name="Lloyd D.M."/>
            <person name="Loveland J.E."/>
            <person name="Lovell J."/>
            <person name="Martin S."/>
            <person name="Mashreghi-Mohammadi M."/>
            <person name="Maslen G.L."/>
            <person name="Matthews L."/>
            <person name="McCann O.T."/>
            <person name="McLaren S.J."/>
            <person name="McLay K."/>
            <person name="McMurray A."/>
            <person name="Moore M.J.F."/>
            <person name="Mullikin J.C."/>
            <person name="Niblett D."/>
            <person name="Nickerson T."/>
            <person name="Novik K.L."/>
            <person name="Oliver K."/>
            <person name="Overton-Larty E.K."/>
            <person name="Parker A."/>
            <person name="Patel R."/>
            <person name="Pearce A.V."/>
            <person name="Peck A.I."/>
            <person name="Phillimore B.J.C.T."/>
            <person name="Phillips S."/>
            <person name="Plumb R.W."/>
            <person name="Porter K.M."/>
            <person name="Ramsey Y."/>
            <person name="Ranby S.A."/>
            <person name="Rice C.M."/>
            <person name="Ross M.T."/>
            <person name="Searle S.M."/>
            <person name="Sehra H.K."/>
            <person name="Sheridan E."/>
            <person name="Skuce C.D."/>
            <person name="Smith S."/>
            <person name="Smith M."/>
            <person name="Spraggon L."/>
            <person name="Squares S.L."/>
            <person name="Steward C.A."/>
            <person name="Sycamore N."/>
            <person name="Tamlyn-Hall G."/>
            <person name="Tester J."/>
            <person name="Theaker A.J."/>
            <person name="Thomas D.W."/>
            <person name="Thorpe A."/>
            <person name="Tracey A."/>
            <person name="Tromans A."/>
            <person name="Tubby B."/>
            <person name="Wall M."/>
            <person name="Wallis J.M."/>
            <person name="West A.P."/>
            <person name="White S.S."/>
            <person name="Whitehead S.L."/>
            <person name="Whittaker H."/>
            <person name="Wild A."/>
            <person name="Willey D.J."/>
            <person name="Wilmer T.E."/>
            <person name="Wood J.M."/>
            <person name="Wray P.W."/>
            <person name="Wyatt J.C."/>
            <person name="Young L."/>
            <person name="Younger R.M."/>
            <person name="Bentley D.R."/>
            <person name="Coulson A."/>
            <person name="Durbin R.M."/>
            <person name="Hubbard T."/>
            <person name="Sulston J.E."/>
            <person name="Dunham I."/>
            <person name="Rogers J."/>
            <person name="Beck S."/>
        </authorList>
    </citation>
    <scope>NUCLEOTIDE SEQUENCE [LARGE SCALE GENOMIC DNA]</scope>
</reference>
<reference key="2">
    <citation type="submission" date="2005-09" db="EMBL/GenBank/DDBJ databases">
        <authorList>
            <person name="Mural R.J."/>
            <person name="Istrail S."/>
            <person name="Sutton G.G."/>
            <person name="Florea L."/>
            <person name="Halpern A.L."/>
            <person name="Mobarry C.M."/>
            <person name="Lippert R."/>
            <person name="Walenz B."/>
            <person name="Shatkay H."/>
            <person name="Dew I."/>
            <person name="Miller J.R."/>
            <person name="Flanigan M.J."/>
            <person name="Edwards N.J."/>
            <person name="Bolanos R."/>
            <person name="Fasulo D."/>
            <person name="Halldorsson B.V."/>
            <person name="Hannenhalli S."/>
            <person name="Turner R."/>
            <person name="Yooseph S."/>
            <person name="Lu F."/>
            <person name="Nusskern D.R."/>
            <person name="Shue B.C."/>
            <person name="Zheng X.H."/>
            <person name="Zhong F."/>
            <person name="Delcher A.L."/>
            <person name="Huson D.H."/>
            <person name="Kravitz S.A."/>
            <person name="Mouchard L."/>
            <person name="Reinert K."/>
            <person name="Remington K.A."/>
            <person name="Clark A.G."/>
            <person name="Waterman M.S."/>
            <person name="Eichler E.E."/>
            <person name="Adams M.D."/>
            <person name="Hunkapiller M.W."/>
            <person name="Myers E.W."/>
            <person name="Venter J.C."/>
        </authorList>
    </citation>
    <scope>NUCLEOTIDE SEQUENCE [LARGE SCALE GENOMIC DNA]</scope>
</reference>
<reference key="3">
    <citation type="journal article" date="2004" name="Genome Res.">
        <title>The status, quality, and expansion of the NIH full-length cDNA project: the Mammalian Gene Collection (MGC).</title>
        <authorList>
            <consortium name="The MGC Project Team"/>
        </authorList>
    </citation>
    <scope>NUCLEOTIDE SEQUENCE [LARGE SCALE MRNA]</scope>
</reference>
<evidence type="ECO:0000255" key="1">
    <source>
        <dbReference type="PROSITE-ProRule" id="PRU01371"/>
    </source>
</evidence>
<evidence type="ECO:0000256" key="2">
    <source>
        <dbReference type="SAM" id="MobiDB-lite"/>
    </source>
</evidence>
<evidence type="ECO:0000305" key="3"/>
<accession>Q5TFG8</accession>
<accession>B2RUZ7</accession>
<accession>Q5TFG9</accession>
<proteinExistence type="evidence at protein level"/>
<name>ZC21B_HUMAN</name>
<gene>
    <name type="primary">ZC2HC1B</name>
    <name type="synonym">C6orf94</name>
    <name type="synonym">FAM164B</name>
</gene>
<keyword id="KW-0479">Metal-binding</keyword>
<keyword id="KW-1267">Proteomics identification</keyword>
<keyword id="KW-1185">Reference proteome</keyword>
<keyword id="KW-0677">Repeat</keyword>
<keyword id="KW-0862">Zinc</keyword>
<keyword id="KW-0863">Zinc-finger</keyword>
<organism>
    <name type="scientific">Homo sapiens</name>
    <name type="common">Human</name>
    <dbReference type="NCBI Taxonomy" id="9606"/>
    <lineage>
        <taxon>Eukaryota</taxon>
        <taxon>Metazoa</taxon>
        <taxon>Chordata</taxon>
        <taxon>Craniata</taxon>
        <taxon>Vertebrata</taxon>
        <taxon>Euteleostomi</taxon>
        <taxon>Mammalia</taxon>
        <taxon>Eutheria</taxon>
        <taxon>Euarchontoglires</taxon>
        <taxon>Primates</taxon>
        <taxon>Haplorrhini</taxon>
        <taxon>Catarrhini</taxon>
        <taxon>Hominidae</taxon>
        <taxon>Homo</taxon>
    </lineage>
</organism>
<protein>
    <recommendedName>
        <fullName>Zinc finger C2HC domain-containing protein 1B</fullName>
    </recommendedName>
</protein>
<dbReference type="EMBL" id="AL049844">
    <property type="status" value="NOT_ANNOTATED_CDS"/>
    <property type="molecule type" value="Genomic_DNA"/>
</dbReference>
<dbReference type="EMBL" id="CH471051">
    <property type="protein sequence ID" value="EAW47857.1"/>
    <property type="molecule type" value="Genomic_DNA"/>
</dbReference>
<dbReference type="EMBL" id="BC146950">
    <property type="protein sequence ID" value="AAI46951.1"/>
    <property type="molecule type" value="mRNA"/>
</dbReference>
<dbReference type="EMBL" id="BC146969">
    <property type="protein sequence ID" value="AAI46970.1"/>
    <property type="molecule type" value="mRNA"/>
</dbReference>
<dbReference type="CCDS" id="CCDS47495.1"/>
<dbReference type="RefSeq" id="NP_001013645.1">
    <property type="nucleotide sequence ID" value="NM_001013623.3"/>
</dbReference>
<dbReference type="BioGRID" id="127527">
    <property type="interactions" value="56"/>
</dbReference>
<dbReference type="FunCoup" id="Q5TFG8">
    <property type="interactions" value="6"/>
</dbReference>
<dbReference type="IntAct" id="Q5TFG8">
    <property type="interactions" value="26"/>
</dbReference>
<dbReference type="MINT" id="Q5TFG8"/>
<dbReference type="STRING" id="9606.ENSP00000237275"/>
<dbReference type="iPTMnet" id="Q5TFG8"/>
<dbReference type="PhosphoSitePlus" id="Q5TFG8"/>
<dbReference type="BioMuta" id="ZC2HC1B"/>
<dbReference type="DMDM" id="134035400"/>
<dbReference type="MassIVE" id="Q5TFG8"/>
<dbReference type="PaxDb" id="9606-ENSP00000237275"/>
<dbReference type="PeptideAtlas" id="Q5TFG8"/>
<dbReference type="ProteomicsDB" id="65083"/>
<dbReference type="Antibodypedia" id="33174">
    <property type="antibodies" value="44 antibodies from 11 providers"/>
</dbReference>
<dbReference type="DNASU" id="153918"/>
<dbReference type="Ensembl" id="ENST00000237275.9">
    <property type="protein sequence ID" value="ENSP00000237275.6"/>
    <property type="gene ID" value="ENSG00000118491.10"/>
</dbReference>
<dbReference type="GeneID" id="153918"/>
<dbReference type="KEGG" id="hsa:153918"/>
<dbReference type="MANE-Select" id="ENST00000237275.9">
    <property type="protein sequence ID" value="ENSP00000237275.6"/>
    <property type="RefSeq nucleotide sequence ID" value="NM_001013623.3"/>
    <property type="RefSeq protein sequence ID" value="NP_001013645.1"/>
</dbReference>
<dbReference type="UCSC" id="uc010khk.4">
    <property type="organism name" value="human"/>
</dbReference>
<dbReference type="AGR" id="HGNC:21174"/>
<dbReference type="CTD" id="153918"/>
<dbReference type="DisGeNET" id="153918"/>
<dbReference type="GeneCards" id="ZC2HC1B"/>
<dbReference type="HGNC" id="HGNC:21174">
    <property type="gene designation" value="ZC2HC1B"/>
</dbReference>
<dbReference type="HPA" id="ENSG00000118491">
    <property type="expression patterns" value="Tissue enriched (testis)"/>
</dbReference>
<dbReference type="neXtProt" id="NX_Q5TFG8"/>
<dbReference type="PharmGKB" id="PA165617689"/>
<dbReference type="VEuPathDB" id="HostDB:ENSG00000118491"/>
<dbReference type="eggNOG" id="KOG3940">
    <property type="taxonomic scope" value="Eukaryota"/>
</dbReference>
<dbReference type="GeneTree" id="ENSGT00940000161511"/>
<dbReference type="HOGENOM" id="CLU_098467_1_0_1"/>
<dbReference type="InParanoid" id="Q5TFG8"/>
<dbReference type="OMA" id="ARHEPIC"/>
<dbReference type="OrthoDB" id="10066537at2759"/>
<dbReference type="PAN-GO" id="Q5TFG8">
    <property type="GO annotations" value="0 GO annotations based on evolutionary models"/>
</dbReference>
<dbReference type="PhylomeDB" id="Q5TFG8"/>
<dbReference type="PathwayCommons" id="Q5TFG8"/>
<dbReference type="SignaLink" id="Q5TFG8"/>
<dbReference type="BioGRID-ORCS" id="153918">
    <property type="hits" value="9 hits in 1078 CRISPR screens"/>
</dbReference>
<dbReference type="ChiTaRS" id="ZC2HC1B">
    <property type="organism name" value="human"/>
</dbReference>
<dbReference type="GenomeRNAi" id="153918"/>
<dbReference type="Pharos" id="Q5TFG8">
    <property type="development level" value="Tdark"/>
</dbReference>
<dbReference type="PRO" id="PR:Q5TFG8"/>
<dbReference type="Proteomes" id="UP000005640">
    <property type="component" value="Chromosome 6"/>
</dbReference>
<dbReference type="RNAct" id="Q5TFG8">
    <property type="molecule type" value="protein"/>
</dbReference>
<dbReference type="Bgee" id="ENSG00000118491">
    <property type="expression patterns" value="Expressed in male germ line stem cell (sensu Vertebrata) in testis and 45 other cell types or tissues"/>
</dbReference>
<dbReference type="GO" id="GO:0008270">
    <property type="term" value="F:zinc ion binding"/>
    <property type="evidence" value="ECO:0007669"/>
    <property type="project" value="UniProtKB-KW"/>
</dbReference>
<dbReference type="Gene3D" id="3.30.160.60">
    <property type="entry name" value="Classic Zinc Finger"/>
    <property type="match status" value="1"/>
</dbReference>
<dbReference type="InterPro" id="IPR026319">
    <property type="entry name" value="ZC2HC1A/B-like"/>
</dbReference>
<dbReference type="InterPro" id="IPR049899">
    <property type="entry name" value="Znf_C2HC_C3H"/>
</dbReference>
<dbReference type="PANTHER" id="PTHR13555">
    <property type="entry name" value="C2H2 ZINC FINGER CGI-62-RELATED"/>
    <property type="match status" value="1"/>
</dbReference>
<dbReference type="PANTHER" id="PTHR13555:SF36">
    <property type="entry name" value="ZINC FINGER C2HC DOMAIN-CONTAINING PROTEIN 1B"/>
    <property type="match status" value="1"/>
</dbReference>
<dbReference type="Pfam" id="PF13913">
    <property type="entry name" value="zf-C2HC_2"/>
    <property type="match status" value="2"/>
</dbReference>
<dbReference type="PROSITE" id="PS52027">
    <property type="entry name" value="ZF_C2HC_C3H"/>
    <property type="match status" value="2"/>
</dbReference>
<sequence length="222" mass="24665">MAGAEPFLADGNQELFPCEVCGRRFAADVLERHGPICKKLFNRKRKPFSSLKQRLQGTDIPTVKKTPQSKSPPVRKSNWRQQHEDFINAIRSAKQCMLAIKEGRPLPPPPPPSLNPDYIQRPYCMRRFNESAAERHTNFCKDQSSRRVFNPAQTAAKLASRAQGRAQMGPKKEPTVTSAVGALLQNRVLVATNEVPTKSGLAMDPASGAKLRQGFSKSSKKD</sequence>
<feature type="chain" id="PRO_0000280252" description="Zinc finger C2HC domain-containing protein 1B">
    <location>
        <begin position="1"/>
        <end position="222"/>
    </location>
</feature>
<feature type="zinc finger region" description="C2HC/C3H-type 1" evidence="1">
    <location>
        <begin position="14"/>
        <end position="43"/>
    </location>
</feature>
<feature type="zinc finger region" description="C2HC/C3H-type 2; degenerate" evidence="1">
    <location>
        <begin position="117"/>
        <end position="146"/>
    </location>
</feature>
<feature type="region of interest" description="Disordered" evidence="2">
    <location>
        <begin position="48"/>
        <end position="78"/>
    </location>
</feature>
<feature type="region of interest" description="Disordered" evidence="2">
    <location>
        <begin position="196"/>
        <end position="222"/>
    </location>
</feature>
<feature type="binding site" evidence="1">
    <location>
        <position position="18"/>
    </location>
    <ligand>
        <name>Zn(2+)</name>
        <dbReference type="ChEBI" id="CHEBI:29105"/>
    </ligand>
</feature>
<feature type="binding site" evidence="1">
    <location>
        <position position="21"/>
    </location>
    <ligand>
        <name>Zn(2+)</name>
        <dbReference type="ChEBI" id="CHEBI:29105"/>
    </ligand>
</feature>
<feature type="binding site" evidence="1">
    <location>
        <position position="33"/>
    </location>
    <ligand>
        <name>Zn(2+)</name>
        <dbReference type="ChEBI" id="CHEBI:29105"/>
    </ligand>
</feature>
<feature type="binding site" evidence="1">
    <location>
        <position position="37"/>
    </location>
    <ligand>
        <name>Zn(2+)</name>
        <dbReference type="ChEBI" id="CHEBI:29105"/>
    </ligand>
</feature>
<feature type="sequence variant" id="VAR_053853" description="In dbSNP:rs6934118.">
    <original>P</original>
    <variation>S</variation>
    <location>
        <position position="6"/>
    </location>
</feature>